<evidence type="ECO:0000255" key="1">
    <source>
        <dbReference type="HAMAP-Rule" id="MF_04065"/>
    </source>
</evidence>
<evidence type="ECO:0000256" key="2">
    <source>
        <dbReference type="SAM" id="MobiDB-lite"/>
    </source>
</evidence>
<dbReference type="EC" id="2.7.7.48" evidence="1"/>
<dbReference type="EMBL" id="M23972">
    <property type="protein sequence ID" value="AAA43632.1"/>
    <property type="molecule type" value="Genomic_RNA"/>
</dbReference>
<dbReference type="EMBL" id="AY210012">
    <property type="protein sequence ID" value="AAO46328.1"/>
    <property type="molecule type" value="Genomic_RNA"/>
</dbReference>
<dbReference type="SMR" id="P21426"/>
<dbReference type="GO" id="GO:0030430">
    <property type="term" value="C:host cell cytoplasm"/>
    <property type="evidence" value="ECO:0007669"/>
    <property type="project" value="UniProtKB-SubCell"/>
</dbReference>
<dbReference type="GO" id="GO:0042025">
    <property type="term" value="C:host cell nucleus"/>
    <property type="evidence" value="ECO:0007669"/>
    <property type="project" value="UniProtKB-SubCell"/>
</dbReference>
<dbReference type="GO" id="GO:0000166">
    <property type="term" value="F:nucleotide binding"/>
    <property type="evidence" value="ECO:0007669"/>
    <property type="project" value="UniProtKB-UniRule"/>
</dbReference>
<dbReference type="GO" id="GO:0003723">
    <property type="term" value="F:RNA binding"/>
    <property type="evidence" value="ECO:0007669"/>
    <property type="project" value="InterPro"/>
</dbReference>
<dbReference type="GO" id="GO:0003968">
    <property type="term" value="F:RNA-directed RNA polymerase activity"/>
    <property type="evidence" value="ECO:0007669"/>
    <property type="project" value="UniProtKB-UniRule"/>
</dbReference>
<dbReference type="GO" id="GO:0006351">
    <property type="term" value="P:DNA-templated transcription"/>
    <property type="evidence" value="ECO:0007669"/>
    <property type="project" value="UniProtKB-UniRule"/>
</dbReference>
<dbReference type="GO" id="GO:0039657">
    <property type="term" value="P:symbiont-mediated suppression of host gene expression"/>
    <property type="evidence" value="ECO:0007669"/>
    <property type="project" value="UniProtKB-KW"/>
</dbReference>
<dbReference type="GO" id="GO:0039523">
    <property type="term" value="P:symbiont-mediated suppression of host mRNA transcription via inhibition of RNA polymerase II activity"/>
    <property type="evidence" value="ECO:0007669"/>
    <property type="project" value="UniProtKB-UniRule"/>
</dbReference>
<dbReference type="GO" id="GO:0039694">
    <property type="term" value="P:viral RNA genome replication"/>
    <property type="evidence" value="ECO:0007669"/>
    <property type="project" value="UniProtKB-UniRule"/>
</dbReference>
<dbReference type="GO" id="GO:0019083">
    <property type="term" value="P:viral transcription"/>
    <property type="evidence" value="ECO:0007669"/>
    <property type="project" value="UniProtKB-KW"/>
</dbReference>
<dbReference type="Gene3D" id="6.10.140.720">
    <property type="match status" value="1"/>
</dbReference>
<dbReference type="HAMAP" id="MF_04065">
    <property type="entry name" value="INFV_RDRP"/>
    <property type="match status" value="1"/>
</dbReference>
<dbReference type="InterPro" id="IPR007099">
    <property type="entry name" value="RNA-dir_pol_NSvirus"/>
</dbReference>
<dbReference type="InterPro" id="IPR001407">
    <property type="entry name" value="RNA_pol_PB1_influenza"/>
</dbReference>
<dbReference type="Pfam" id="PF00602">
    <property type="entry name" value="Flu_PB1"/>
    <property type="match status" value="1"/>
</dbReference>
<dbReference type="PIRSF" id="PIRSF000827">
    <property type="entry name" value="RdRPol_OMV"/>
    <property type="match status" value="1"/>
</dbReference>
<dbReference type="PROSITE" id="PS50525">
    <property type="entry name" value="RDRP_SSRNA_NEG_SEG"/>
    <property type="match status" value="1"/>
</dbReference>
<reference key="1">
    <citation type="journal article" date="1988" name="Virology">
        <title>Identification of sequence changes in the cold-adapted, live attenuated influenza vaccine strain, A/Ann Arbor/6/60 (H2N2).</title>
        <authorList>
            <person name="Cox N.J."/>
            <person name="Kitame F."/>
            <person name="Kendal A.P."/>
            <person name="Maassab H.F."/>
            <person name="Naeve C."/>
        </authorList>
    </citation>
    <scope>NUCLEOTIDE SEQUENCE [GENOMIC RNA]</scope>
</reference>
<reference key="2">
    <citation type="journal article" date="2004" name="Virology">
        <title>Genetic analysis of human H2N2 and early H3N2 influenza viruses, 1957-1972: evidence for genetic divergence and multiple reassortment events.</title>
        <authorList>
            <person name="Lindstrom S.E."/>
            <person name="Cox N.J."/>
            <person name="Klimov A."/>
        </authorList>
    </citation>
    <scope>NUCLEOTIDE SEQUENCE [GENOMIC RNA]</scope>
</reference>
<organismHost>
    <name type="scientific">Aves</name>
    <dbReference type="NCBI Taxonomy" id="8782"/>
</organismHost>
<organismHost>
    <name type="scientific">Homo sapiens</name>
    <name type="common">Human</name>
    <dbReference type="NCBI Taxonomy" id="9606"/>
</organismHost>
<gene>
    <name evidence="1" type="primary">PB1</name>
</gene>
<keyword id="KW-1262">Eukaryotic host gene expression shutoff by virus</keyword>
<keyword id="KW-1191">Eukaryotic host transcription shutoff by virus</keyword>
<keyword id="KW-1035">Host cytoplasm</keyword>
<keyword id="KW-1190">Host gene expression shutoff by virus</keyword>
<keyword id="KW-1048">Host nucleus</keyword>
<keyword id="KW-0945">Host-virus interaction</keyword>
<keyword id="KW-1104">Inhibition of host RNA polymerase II by virus</keyword>
<keyword id="KW-0547">Nucleotide-binding</keyword>
<keyword id="KW-0548">Nucleotidyltransferase</keyword>
<keyword id="KW-0597">Phosphoprotein</keyword>
<keyword id="KW-0696">RNA-directed RNA polymerase</keyword>
<keyword id="KW-0808">Transferase</keyword>
<keyword id="KW-0693">Viral RNA replication</keyword>
<keyword id="KW-1195">Viral transcription</keyword>
<name>RDRP_I60A0</name>
<comment type="function">
    <text evidence="1">RNA-dependent RNA polymerase which is responsible for replication and transcription of virus RNA segments. The transcription of viral mRNAs occurs by a unique mechanism called cap-snatching. 5' methylated caps of cellular mRNAs are cleaved after 10-13 nucleotides by PA. In turn, these short capped RNAs are used as primers by PB1 for transcription of viral mRNAs. During virus replication, PB1 initiates RNA synthesis and copy vRNA into complementary RNA (cRNA) which in turn serves as a template for the production of more vRNAs.</text>
</comment>
<comment type="catalytic activity">
    <reaction evidence="1">
        <text>RNA(n) + a ribonucleoside 5'-triphosphate = RNA(n+1) + diphosphate</text>
        <dbReference type="Rhea" id="RHEA:21248"/>
        <dbReference type="Rhea" id="RHEA-COMP:14527"/>
        <dbReference type="Rhea" id="RHEA-COMP:17342"/>
        <dbReference type="ChEBI" id="CHEBI:33019"/>
        <dbReference type="ChEBI" id="CHEBI:61557"/>
        <dbReference type="ChEBI" id="CHEBI:140395"/>
        <dbReference type="EC" id="2.7.7.48"/>
    </reaction>
</comment>
<comment type="subunit">
    <text evidence="1">Influenza RNA polymerase is composed of three subunits: PB1, PB2 and PA. Interacts (via N-terminus) with PA (via C-terminus). Interacts (via C-terminus) with PB2 (via N-terminus); this interaction is essential for transcription initiation.</text>
</comment>
<comment type="subcellular location">
    <subcellularLocation>
        <location evidence="1">Host nucleus</location>
    </subcellularLocation>
    <subcellularLocation>
        <location evidence="1">Host cytoplasm</location>
    </subcellularLocation>
</comment>
<comment type="PTM">
    <text evidence="1">Phosphorylated by host PRKCA.</text>
</comment>
<comment type="similarity">
    <text evidence="1">Belongs to the influenza viruses polymerase PB1 family.</text>
</comment>
<protein>
    <recommendedName>
        <fullName evidence="1">RNA-directed RNA polymerase catalytic subunit</fullName>
        <ecNumber evidence="1">2.7.7.48</ecNumber>
    </recommendedName>
    <alternativeName>
        <fullName evidence="1">Polymerase basic protein 1</fullName>
        <shortName evidence="1">PB1</shortName>
    </alternativeName>
    <alternativeName>
        <fullName evidence="1">RNA-directed RNA polymerase subunit P1</fullName>
    </alternativeName>
</protein>
<sequence length="757" mass="86443">MDVNPTLLFLKVPAQNAISTTFPYTGDPPYSHGTGTGYTMDTVNRTHQYSEKGKWTTNTETGAHQLNPIDGPLPEDNEPSGYAQTDCVLEAMAFLEESHPGIFENSCLETMEVIQQTRVDKLTQGRQTYDWTLNRNQPAATALANTIEVFRSNGLTANESGRLIDFLKDVIESMDKEEMEITTHFQRKRRVRDNMTKKMVTQRTIGKKKQRLNKRSYLIRALTLNTMTKDAERGKLKRRAIATPGMQIRGFVYFVETLARSICEKLEQSGLPVGGNEKKAKLANVVRKMMTNSQDTELSFTITGDNTKWNENQNPRMFLAMITYITRNQPEWFRNVLSIAPIMFSNKMARLGKGYMFKSKSMKLRTQIPAEMLASIDLKYFNESTRKKIEKIRPLLIDGTVSLSPGMMMGMFNMLSTVLGVSILNLGQKKYTKTTYWWDGLQSSDDFALIVNAPNHEGIQAGVDRFYRTCKLVGINMSKKKSYINRTGTFEFTSFFYRYGFVANFSMELPSFGVSGINESADMSIGVTVIKNNMINNDLGPATAQLALQLFIKDYRYTYRCHRGDTQIQTRRSFELKKLWEQTRSKAGLLVSDGGPNLYNIRNLHIPEVCLKWELMDEDYQGRLCNPLNPFVSHKEIESVNNAVVMPAHGPAKSMEYDAVATTHSWIPKRNRSILNTSQRGILEDEQMYQKCCNLFEKFFPSSSYRRPVGISSMVEAMVSRARIDARIDFESGRIKKEEFAEIMKICSTIEELRRQK</sequence>
<feature type="chain" id="PRO_0000078744" description="RNA-directed RNA polymerase catalytic subunit">
    <location>
        <begin position="1"/>
        <end position="757"/>
    </location>
</feature>
<feature type="domain" description="RdRp catalytic" evidence="1">
    <location>
        <begin position="286"/>
        <end position="483"/>
    </location>
</feature>
<feature type="region of interest" description="Disordered" evidence="2">
    <location>
        <begin position="56"/>
        <end position="78"/>
    </location>
</feature>
<feature type="region of interest" description="Promoter-binding site" evidence="1">
    <location>
        <begin position="249"/>
        <end position="256"/>
    </location>
</feature>
<feature type="short sequence motif" description="Nuclear localization signal" evidence="1">
    <location>
        <begin position="187"/>
        <end position="195"/>
    </location>
</feature>
<feature type="short sequence motif" description="Nuclear localization signal" evidence="1">
    <location>
        <begin position="203"/>
        <end position="216"/>
    </location>
</feature>
<proteinExistence type="inferred from homology"/>
<organism>
    <name type="scientific">Influenza A virus (strain A/Ann Arbor/6/1960 H2N2)</name>
    <dbReference type="NCBI Taxonomy" id="384498"/>
    <lineage>
        <taxon>Viruses</taxon>
        <taxon>Riboviria</taxon>
        <taxon>Orthornavirae</taxon>
        <taxon>Negarnaviricota</taxon>
        <taxon>Polyploviricotina</taxon>
        <taxon>Insthoviricetes</taxon>
        <taxon>Articulavirales</taxon>
        <taxon>Orthomyxoviridae</taxon>
        <taxon>Alphainfluenzavirus</taxon>
        <taxon>Alphainfluenzavirus influenzae</taxon>
        <taxon>Influenza A virus</taxon>
    </lineage>
</organism>
<accession>P21426</accession>
<accession>Q540D0</accession>